<proteinExistence type="inferred from homology"/>
<organism>
    <name type="scientific">Brucella melitensis biotype 1 (strain ATCC 23456 / CCUG 17765 / NCTC 10094 / 16M)</name>
    <dbReference type="NCBI Taxonomy" id="224914"/>
    <lineage>
        <taxon>Bacteria</taxon>
        <taxon>Pseudomonadati</taxon>
        <taxon>Pseudomonadota</taxon>
        <taxon>Alphaproteobacteria</taxon>
        <taxon>Hyphomicrobiales</taxon>
        <taxon>Brucellaceae</taxon>
        <taxon>Brucella/Ochrobactrum group</taxon>
        <taxon>Brucella</taxon>
    </lineage>
</organism>
<keyword id="KW-0028">Amino-acid biosynthesis</keyword>
<keyword id="KW-0170">Cobalt</keyword>
<keyword id="KW-0220">Diaminopimelate biosynthesis</keyword>
<keyword id="KW-0378">Hydrolase</keyword>
<keyword id="KW-0457">Lysine biosynthesis</keyword>
<keyword id="KW-0479">Metal-binding</keyword>
<keyword id="KW-0862">Zinc</keyword>
<reference key="1">
    <citation type="journal article" date="2002" name="Proc. Natl. Acad. Sci. U.S.A.">
        <title>The genome sequence of the facultative intracellular pathogen Brucella melitensis.</title>
        <authorList>
            <person name="DelVecchio V.G."/>
            <person name="Kapatral V."/>
            <person name="Redkar R.J."/>
            <person name="Patra G."/>
            <person name="Mujer C."/>
            <person name="Los T."/>
            <person name="Ivanova N."/>
            <person name="Anderson I."/>
            <person name="Bhattacharyya A."/>
            <person name="Lykidis A."/>
            <person name="Reznik G."/>
            <person name="Jablonski L."/>
            <person name="Larsen N."/>
            <person name="D'Souza M."/>
            <person name="Bernal A."/>
            <person name="Mazur M."/>
            <person name="Goltsman E."/>
            <person name="Selkov E."/>
            <person name="Elzer P.H."/>
            <person name="Hagius S."/>
            <person name="O'Callaghan D."/>
            <person name="Letesson J.-J."/>
            <person name="Haselkorn R."/>
            <person name="Kyrpides N.C."/>
            <person name="Overbeek R."/>
        </authorList>
    </citation>
    <scope>NUCLEOTIDE SEQUENCE [LARGE SCALE GENOMIC DNA]</scope>
    <source>
        <strain>ATCC 23456 / CCUG 17765 / NCTC 10094 / 16M</strain>
    </source>
</reference>
<name>DAPE_BRUME</name>
<sequence>MTLPVNPVDNLAALIRCPSVTPAEGGALTALEKMLKLMGFSANRPVFSDDNTPDIENLYARKSGNGPHLMFAGHTDVVPPGDEKDWKHPPFAAAIEDGVMYGRGAVDMKGGIACFVAAVARHIEKHGNIKGSISFLITGDEEGPAVNGTVKLLEWAKQRGESWDASIVGEPTNPNALGDMIKIGRRGSLSGTITVHGVQGHAAYPHLAENPVRGIVTLVDSLLCPAFDEGTANFQASNLEVTTIDVGNKATNVIPNKATASFNIRFNDTWTAESLQAEIISRLERAARDNRLRQGRETPIKYELTWRERPSHVFLTHDEKLIGTLTASVEAVTGKRPELSTSGGTSDARFIKDYCPVVEFGLTGQTMHMVDERVALADLEGLTQIYERFIADFFG</sequence>
<dbReference type="EC" id="3.5.1.18" evidence="1"/>
<dbReference type="EMBL" id="AE008918">
    <property type="protein sequence ID" value="AAL53509.1"/>
    <property type="molecule type" value="Genomic_DNA"/>
</dbReference>
<dbReference type="PIR" id="AB3543">
    <property type="entry name" value="AB3543"/>
</dbReference>
<dbReference type="RefSeq" id="WP_004686909.1">
    <property type="nucleotide sequence ID" value="NC_003318.1"/>
</dbReference>
<dbReference type="SMR" id="Q8YDB0"/>
<dbReference type="GeneID" id="29595221"/>
<dbReference type="KEGG" id="bme:BMEII0268"/>
<dbReference type="KEGG" id="bmel:DK63_2974"/>
<dbReference type="PATRIC" id="fig|224914.52.peg.3120"/>
<dbReference type="eggNOG" id="COG0624">
    <property type="taxonomic scope" value="Bacteria"/>
</dbReference>
<dbReference type="PhylomeDB" id="Q8YDB0"/>
<dbReference type="UniPathway" id="UPA00034">
    <property type="reaction ID" value="UER00021"/>
</dbReference>
<dbReference type="Proteomes" id="UP000000419">
    <property type="component" value="Chromosome II"/>
</dbReference>
<dbReference type="GO" id="GO:0008777">
    <property type="term" value="F:acetylornithine deacetylase activity"/>
    <property type="evidence" value="ECO:0007669"/>
    <property type="project" value="TreeGrafter"/>
</dbReference>
<dbReference type="GO" id="GO:0050897">
    <property type="term" value="F:cobalt ion binding"/>
    <property type="evidence" value="ECO:0007669"/>
    <property type="project" value="UniProtKB-UniRule"/>
</dbReference>
<dbReference type="GO" id="GO:0009014">
    <property type="term" value="F:succinyl-diaminopimelate desuccinylase activity"/>
    <property type="evidence" value="ECO:0007669"/>
    <property type="project" value="UniProtKB-UniRule"/>
</dbReference>
<dbReference type="GO" id="GO:0008270">
    <property type="term" value="F:zinc ion binding"/>
    <property type="evidence" value="ECO:0007669"/>
    <property type="project" value="UniProtKB-UniRule"/>
</dbReference>
<dbReference type="GO" id="GO:0019877">
    <property type="term" value="P:diaminopimelate biosynthetic process"/>
    <property type="evidence" value="ECO:0007669"/>
    <property type="project" value="UniProtKB-UniRule"/>
</dbReference>
<dbReference type="GO" id="GO:0006526">
    <property type="term" value="P:L-arginine biosynthetic process"/>
    <property type="evidence" value="ECO:0007669"/>
    <property type="project" value="TreeGrafter"/>
</dbReference>
<dbReference type="GO" id="GO:0009089">
    <property type="term" value="P:lysine biosynthetic process via diaminopimelate"/>
    <property type="evidence" value="ECO:0007669"/>
    <property type="project" value="UniProtKB-UniRule"/>
</dbReference>
<dbReference type="CDD" id="cd03891">
    <property type="entry name" value="M20_DapE_proteobac"/>
    <property type="match status" value="1"/>
</dbReference>
<dbReference type="Gene3D" id="3.30.70.360">
    <property type="match status" value="1"/>
</dbReference>
<dbReference type="Gene3D" id="3.40.630.10">
    <property type="entry name" value="Zn peptidases"/>
    <property type="match status" value="2"/>
</dbReference>
<dbReference type="HAMAP" id="MF_01690">
    <property type="entry name" value="DapE"/>
    <property type="match status" value="1"/>
</dbReference>
<dbReference type="InterPro" id="IPR001261">
    <property type="entry name" value="ArgE/DapE_CS"/>
</dbReference>
<dbReference type="InterPro" id="IPR036264">
    <property type="entry name" value="Bact_exopeptidase_dim_dom"/>
</dbReference>
<dbReference type="InterPro" id="IPR005941">
    <property type="entry name" value="DapE_proteobac"/>
</dbReference>
<dbReference type="InterPro" id="IPR002933">
    <property type="entry name" value="Peptidase_M20"/>
</dbReference>
<dbReference type="InterPro" id="IPR011650">
    <property type="entry name" value="Peptidase_M20_dimer"/>
</dbReference>
<dbReference type="InterPro" id="IPR050072">
    <property type="entry name" value="Peptidase_M20A"/>
</dbReference>
<dbReference type="NCBIfam" id="TIGR01246">
    <property type="entry name" value="dapE_proteo"/>
    <property type="match status" value="1"/>
</dbReference>
<dbReference type="NCBIfam" id="NF009557">
    <property type="entry name" value="PRK13009.1"/>
    <property type="match status" value="1"/>
</dbReference>
<dbReference type="PANTHER" id="PTHR43808">
    <property type="entry name" value="ACETYLORNITHINE DEACETYLASE"/>
    <property type="match status" value="1"/>
</dbReference>
<dbReference type="PANTHER" id="PTHR43808:SF31">
    <property type="entry name" value="N-ACETYL-L-CITRULLINE DEACETYLASE"/>
    <property type="match status" value="1"/>
</dbReference>
<dbReference type="Pfam" id="PF07687">
    <property type="entry name" value="M20_dimer"/>
    <property type="match status" value="1"/>
</dbReference>
<dbReference type="Pfam" id="PF01546">
    <property type="entry name" value="Peptidase_M20"/>
    <property type="match status" value="1"/>
</dbReference>
<dbReference type="SUPFAM" id="SSF55031">
    <property type="entry name" value="Bacterial exopeptidase dimerisation domain"/>
    <property type="match status" value="1"/>
</dbReference>
<dbReference type="SUPFAM" id="SSF53187">
    <property type="entry name" value="Zn-dependent exopeptidases"/>
    <property type="match status" value="1"/>
</dbReference>
<dbReference type="PROSITE" id="PS00758">
    <property type="entry name" value="ARGE_DAPE_CPG2_1"/>
    <property type="match status" value="1"/>
</dbReference>
<dbReference type="PROSITE" id="PS00759">
    <property type="entry name" value="ARGE_DAPE_CPG2_2"/>
    <property type="match status" value="1"/>
</dbReference>
<protein>
    <recommendedName>
        <fullName evidence="1">Succinyl-diaminopimelate desuccinylase</fullName>
        <shortName evidence="1">SDAP desuccinylase</shortName>
        <ecNumber evidence="1">3.5.1.18</ecNumber>
    </recommendedName>
    <alternativeName>
        <fullName evidence="1">N-succinyl-LL-2,6-diaminoheptanedioate amidohydrolase</fullName>
    </alternativeName>
</protein>
<gene>
    <name evidence="1" type="primary">dapE</name>
    <name type="ordered locus">BMEII0268</name>
</gene>
<comment type="function">
    <text evidence="1">Catalyzes the hydrolysis of N-succinyl-L,L-diaminopimelic acid (SDAP), forming succinate and LL-2,6-diaminopimelate (DAP), an intermediate involved in the bacterial biosynthesis of lysine and meso-diaminopimelic acid, an essential component of bacterial cell walls.</text>
</comment>
<comment type="catalytic activity">
    <reaction evidence="1">
        <text>N-succinyl-(2S,6S)-2,6-diaminopimelate + H2O = (2S,6S)-2,6-diaminopimelate + succinate</text>
        <dbReference type="Rhea" id="RHEA:22608"/>
        <dbReference type="ChEBI" id="CHEBI:15377"/>
        <dbReference type="ChEBI" id="CHEBI:30031"/>
        <dbReference type="ChEBI" id="CHEBI:57609"/>
        <dbReference type="ChEBI" id="CHEBI:58087"/>
        <dbReference type="EC" id="3.5.1.18"/>
    </reaction>
</comment>
<comment type="cofactor">
    <cofactor evidence="1">
        <name>Zn(2+)</name>
        <dbReference type="ChEBI" id="CHEBI:29105"/>
    </cofactor>
    <cofactor evidence="1">
        <name>Co(2+)</name>
        <dbReference type="ChEBI" id="CHEBI:48828"/>
    </cofactor>
    <text evidence="1">Binds 2 Zn(2+) or Co(2+) ions per subunit.</text>
</comment>
<comment type="pathway">
    <text evidence="1">Amino-acid biosynthesis; L-lysine biosynthesis via DAP pathway; LL-2,6-diaminopimelate from (S)-tetrahydrodipicolinate (succinylase route): step 3/3.</text>
</comment>
<comment type="subunit">
    <text evidence="1">Homodimer.</text>
</comment>
<comment type="similarity">
    <text evidence="1">Belongs to the peptidase M20A family. DapE subfamily.</text>
</comment>
<accession>Q8YDB0</accession>
<feature type="chain" id="PRO_0000375488" description="Succinyl-diaminopimelate desuccinylase">
    <location>
        <begin position="1"/>
        <end position="395"/>
    </location>
</feature>
<feature type="active site" evidence="1">
    <location>
        <position position="76"/>
    </location>
</feature>
<feature type="active site" description="Proton acceptor" evidence="1">
    <location>
        <position position="141"/>
    </location>
</feature>
<feature type="binding site" evidence="1">
    <location>
        <position position="74"/>
    </location>
    <ligand>
        <name>Zn(2+)</name>
        <dbReference type="ChEBI" id="CHEBI:29105"/>
        <label>1</label>
    </ligand>
</feature>
<feature type="binding site" evidence="1">
    <location>
        <position position="107"/>
    </location>
    <ligand>
        <name>Zn(2+)</name>
        <dbReference type="ChEBI" id="CHEBI:29105"/>
        <label>1</label>
    </ligand>
</feature>
<feature type="binding site" evidence="1">
    <location>
        <position position="107"/>
    </location>
    <ligand>
        <name>Zn(2+)</name>
        <dbReference type="ChEBI" id="CHEBI:29105"/>
        <label>2</label>
    </ligand>
</feature>
<feature type="binding site" evidence="1">
    <location>
        <position position="142"/>
    </location>
    <ligand>
        <name>Zn(2+)</name>
        <dbReference type="ChEBI" id="CHEBI:29105"/>
        <label>2</label>
    </ligand>
</feature>
<feature type="binding site" evidence="1">
    <location>
        <position position="170"/>
    </location>
    <ligand>
        <name>Zn(2+)</name>
        <dbReference type="ChEBI" id="CHEBI:29105"/>
        <label>1</label>
    </ligand>
</feature>
<feature type="binding site" evidence="1">
    <location>
        <position position="368"/>
    </location>
    <ligand>
        <name>Zn(2+)</name>
        <dbReference type="ChEBI" id="CHEBI:29105"/>
        <label>2</label>
    </ligand>
</feature>
<evidence type="ECO:0000255" key="1">
    <source>
        <dbReference type="HAMAP-Rule" id="MF_01690"/>
    </source>
</evidence>